<keyword id="KW-0150">Chloroplast</keyword>
<keyword id="KW-0378">Hydrolase</keyword>
<keyword id="KW-0934">Plastid</keyword>
<keyword id="KW-0645">Protease</keyword>
<keyword id="KW-0720">Serine protease</keyword>
<feature type="chain" id="PRO_0000275288" description="ATP-dependent Clp protease proteolytic subunit">
    <location>
        <begin position="1"/>
        <end position="196"/>
    </location>
</feature>
<feature type="active site" description="Nucleophile" evidence="1">
    <location>
        <position position="101"/>
    </location>
</feature>
<feature type="active site" evidence="1">
    <location>
        <position position="126"/>
    </location>
</feature>
<name>CLPP_HELAN</name>
<sequence length="196" mass="21863">MPIGVPKVPFRSPGEEDASWVDIYNRLYRERLLFLGQEVDSEISNQLIGLMIYLSIEDDTQDLYLFINSPGGWVIPGVALYDTMQFVQPDVHTICMGSAASMGSFILVGGEITKRLAFPHARVMIHQPAGSFSEVATGEFILEVGELLKLRETLTRVYVQRTGKPVWVVSEDMERDVFMSATEAQAYGIVDLVAVE</sequence>
<organism>
    <name type="scientific">Helianthus annuus</name>
    <name type="common">Common sunflower</name>
    <dbReference type="NCBI Taxonomy" id="4232"/>
    <lineage>
        <taxon>Eukaryota</taxon>
        <taxon>Viridiplantae</taxon>
        <taxon>Streptophyta</taxon>
        <taxon>Embryophyta</taxon>
        <taxon>Tracheophyta</taxon>
        <taxon>Spermatophyta</taxon>
        <taxon>Magnoliopsida</taxon>
        <taxon>eudicotyledons</taxon>
        <taxon>Gunneridae</taxon>
        <taxon>Pentapetalae</taxon>
        <taxon>asterids</taxon>
        <taxon>campanulids</taxon>
        <taxon>Asterales</taxon>
        <taxon>Asteraceae</taxon>
        <taxon>Asteroideae</taxon>
        <taxon>Heliantheae alliance</taxon>
        <taxon>Heliantheae</taxon>
        <taxon>Helianthus</taxon>
    </lineage>
</organism>
<proteinExistence type="inferred from homology"/>
<reference key="1">
    <citation type="submission" date="2006-01" db="EMBL/GenBank/DDBJ databases">
        <title>A comparison of the first two published chloroplast genomes in Asteraceae: Lactuca and Helianthus.</title>
        <authorList>
            <person name="Timme R.E."/>
            <person name="Kuehl J.V."/>
            <person name="Boore J.L."/>
            <person name="Jansen R.K."/>
        </authorList>
    </citation>
    <scope>NUCLEOTIDE SEQUENCE [LARGE SCALE GENOMIC DNA]</scope>
    <source>
        <strain>cv. HA383</strain>
    </source>
</reference>
<dbReference type="EC" id="3.4.21.92" evidence="1"/>
<dbReference type="EMBL" id="DQ383815">
    <property type="protein sequence ID" value="ABD47170.1"/>
    <property type="molecule type" value="Genomic_DNA"/>
</dbReference>
<dbReference type="RefSeq" id="YP_588142.1">
    <property type="nucleotide sequence ID" value="NC_007977.1"/>
</dbReference>
<dbReference type="SMR" id="Q1KXT4"/>
<dbReference type="MEROPS" id="S14.002"/>
<dbReference type="GeneID" id="4055664"/>
<dbReference type="KEGG" id="han:4055664"/>
<dbReference type="OrthoDB" id="1882605at2759"/>
<dbReference type="GO" id="GO:0009570">
    <property type="term" value="C:chloroplast stroma"/>
    <property type="evidence" value="ECO:0007669"/>
    <property type="project" value="UniProtKB-SubCell"/>
</dbReference>
<dbReference type="GO" id="GO:0004176">
    <property type="term" value="F:ATP-dependent peptidase activity"/>
    <property type="evidence" value="ECO:0007669"/>
    <property type="project" value="InterPro"/>
</dbReference>
<dbReference type="GO" id="GO:0004252">
    <property type="term" value="F:serine-type endopeptidase activity"/>
    <property type="evidence" value="ECO:0007669"/>
    <property type="project" value="UniProtKB-UniRule"/>
</dbReference>
<dbReference type="GO" id="GO:0006508">
    <property type="term" value="P:proteolysis"/>
    <property type="evidence" value="ECO:0007669"/>
    <property type="project" value="UniProtKB-UniRule"/>
</dbReference>
<dbReference type="CDD" id="cd07017">
    <property type="entry name" value="S14_ClpP_2"/>
    <property type="match status" value="1"/>
</dbReference>
<dbReference type="FunFam" id="3.90.226.10:FF:000006">
    <property type="entry name" value="ATP-dependent Clp protease proteolytic subunit"/>
    <property type="match status" value="1"/>
</dbReference>
<dbReference type="Gene3D" id="3.90.226.10">
    <property type="entry name" value="2-enoyl-CoA Hydratase, Chain A, domain 1"/>
    <property type="match status" value="1"/>
</dbReference>
<dbReference type="HAMAP" id="MF_00444">
    <property type="entry name" value="ClpP"/>
    <property type="match status" value="1"/>
</dbReference>
<dbReference type="InterPro" id="IPR001907">
    <property type="entry name" value="ClpP"/>
</dbReference>
<dbReference type="InterPro" id="IPR029045">
    <property type="entry name" value="ClpP/crotonase-like_dom_sf"/>
</dbReference>
<dbReference type="InterPro" id="IPR023562">
    <property type="entry name" value="ClpP/TepA"/>
</dbReference>
<dbReference type="InterPro" id="IPR033135">
    <property type="entry name" value="ClpP_His_AS"/>
</dbReference>
<dbReference type="InterPro" id="IPR018215">
    <property type="entry name" value="ClpP_Ser_AS"/>
</dbReference>
<dbReference type="PANTHER" id="PTHR10381">
    <property type="entry name" value="ATP-DEPENDENT CLP PROTEASE PROTEOLYTIC SUBUNIT"/>
    <property type="match status" value="1"/>
</dbReference>
<dbReference type="PANTHER" id="PTHR10381:SF15">
    <property type="entry name" value="CHLOROPLASTIC ATP-DEPENDENT CLP PROTEASE PROTEOLYTIC SUBUNIT 1"/>
    <property type="match status" value="1"/>
</dbReference>
<dbReference type="Pfam" id="PF00574">
    <property type="entry name" value="CLP_protease"/>
    <property type="match status" value="1"/>
</dbReference>
<dbReference type="PRINTS" id="PR00127">
    <property type="entry name" value="CLPPROTEASEP"/>
</dbReference>
<dbReference type="SUPFAM" id="SSF52096">
    <property type="entry name" value="ClpP/crotonase"/>
    <property type="match status" value="1"/>
</dbReference>
<dbReference type="PROSITE" id="PS00382">
    <property type="entry name" value="CLP_PROTEASE_HIS"/>
    <property type="match status" value="1"/>
</dbReference>
<dbReference type="PROSITE" id="PS00381">
    <property type="entry name" value="CLP_PROTEASE_SER"/>
    <property type="match status" value="1"/>
</dbReference>
<geneLocation type="chloroplast"/>
<accession>Q1KXT4</accession>
<gene>
    <name evidence="1" type="primary">clpP</name>
</gene>
<evidence type="ECO:0000255" key="1">
    <source>
        <dbReference type="HAMAP-Rule" id="MF_00444"/>
    </source>
</evidence>
<protein>
    <recommendedName>
        <fullName evidence="1">ATP-dependent Clp protease proteolytic subunit</fullName>
        <ecNumber evidence="1">3.4.21.92</ecNumber>
    </recommendedName>
    <alternativeName>
        <fullName evidence="1">Endopeptidase Clp</fullName>
    </alternativeName>
</protein>
<comment type="function">
    <text evidence="1">Cleaves peptides in various proteins in a process that requires ATP hydrolysis. Has a chymotrypsin-like activity. Plays a major role in the degradation of misfolded proteins.</text>
</comment>
<comment type="catalytic activity">
    <reaction evidence="1">
        <text>Hydrolysis of proteins to small peptides in the presence of ATP and magnesium. alpha-casein is the usual test substrate. In the absence of ATP, only oligopeptides shorter than five residues are hydrolyzed (such as succinyl-Leu-Tyr-|-NHMec, and Leu-Tyr-Leu-|-Tyr-Trp, in which cleavage of the -Tyr-|-Leu- and -Tyr-|-Trp bonds also occurs).</text>
        <dbReference type="EC" id="3.4.21.92"/>
    </reaction>
</comment>
<comment type="subunit">
    <text>Component of the chloroplastic Clp protease core complex.</text>
</comment>
<comment type="subcellular location">
    <subcellularLocation>
        <location evidence="1">Plastid</location>
        <location evidence="1">Chloroplast stroma</location>
    </subcellularLocation>
</comment>
<comment type="similarity">
    <text evidence="1">Belongs to the peptidase S14 family.</text>
</comment>